<sequence length="534" mass="60265">MGCVQCKDKEATKLTDERDGSLTQSSGYRYGTDPTPQHYPSFGVTSIPNYNNFHATGGQGLTVFGGVNSSSHTGTLRTRGGTGVTLFEALYDYEARTEDDLSFHKGEKFQILNSSEGDWWEARSLTTGETGYIPSNYVAPVDSIQAEEWYFGKLGRKDAERQLLSFGNPRGTFLIRESETTKGAYSLSIRDWDDMKGDHVKHYKIRKLDNGGYYITTRAQFETLQQLVQHYSEKADGLCFNLTVIATNNTPQTVGLAKDAWEVARDSLFLEQKLGQGCFAEVWRGTWNGNTKVAIKTLKPGTMSPESFLEEAQIMKKLKHDKLVQLYAVVSRRPIYIVTEYMSKGSLLIFLKDGEGRALKLPNLVDMAAQVAAGMAYIERMNYIHRDLRSANILVGNGLICKIADFGLARLIEDNEYTARQGAKFPIKWTAPEAALYGRFTIKSDVWSFGILLTELVTKGRVPYPGMNNREVLEQVERGYRMPCPQDCPISLHELMIHCWKKDPEERPTFEYLQGFLEDYFTATEPQYQPGDNL</sequence>
<evidence type="ECO:0000250" key="1"/>
<evidence type="ECO:0000250" key="2">
    <source>
        <dbReference type="UniProtKB" id="P06241"/>
    </source>
</evidence>
<evidence type="ECO:0000250" key="3">
    <source>
        <dbReference type="UniProtKB" id="Q62844"/>
    </source>
</evidence>
<evidence type="ECO:0000255" key="4">
    <source>
        <dbReference type="PROSITE-ProRule" id="PRU00159"/>
    </source>
</evidence>
<evidence type="ECO:0000255" key="5">
    <source>
        <dbReference type="PROSITE-ProRule" id="PRU00191"/>
    </source>
</evidence>
<evidence type="ECO:0000255" key="6">
    <source>
        <dbReference type="PROSITE-ProRule" id="PRU00192"/>
    </source>
</evidence>
<evidence type="ECO:0000255" key="7">
    <source>
        <dbReference type="PROSITE-ProRule" id="PRU10028"/>
    </source>
</evidence>
<evidence type="ECO:0000256" key="8">
    <source>
        <dbReference type="SAM" id="MobiDB-lite"/>
    </source>
</evidence>
<evidence type="ECO:0000269" key="9">
    <source>
    </source>
</evidence>
<evidence type="ECO:0000269" key="10">
    <source>
    </source>
</evidence>
<evidence type="ECO:0007829" key="11">
    <source>
        <dbReference type="PDB" id="2L2P"/>
    </source>
</evidence>
<evidence type="ECO:0007829" key="12">
    <source>
        <dbReference type="PDB" id="3CQT"/>
    </source>
</evidence>
<keyword id="KW-0002">3D-structure</keyword>
<keyword id="KW-0067">ATP-binding</keyword>
<keyword id="KW-1003">Cell membrane</keyword>
<keyword id="KW-0963">Cytoplasm</keyword>
<keyword id="KW-0217">Developmental protein</keyword>
<keyword id="KW-0418">Kinase</keyword>
<keyword id="KW-0449">Lipoprotein</keyword>
<keyword id="KW-0464">Manganese</keyword>
<keyword id="KW-0472">Membrane</keyword>
<keyword id="KW-0479">Metal-binding</keyword>
<keyword id="KW-0519">Myristate</keyword>
<keyword id="KW-0547">Nucleotide-binding</keyword>
<keyword id="KW-0539">Nucleus</keyword>
<keyword id="KW-0564">Palmitate</keyword>
<keyword id="KW-0597">Phosphoprotein</keyword>
<keyword id="KW-0656">Proto-oncogene</keyword>
<keyword id="KW-1185">Reference proteome</keyword>
<keyword id="KW-0727">SH2 domain</keyword>
<keyword id="KW-0728">SH3 domain</keyword>
<keyword id="KW-0808">Transferase</keyword>
<keyword id="KW-0829">Tyrosine-protein kinase</keyword>
<name>FYN_CHICK</name>
<reference key="1">
    <citation type="journal article" date="1993" name="Oncogene">
        <title>A novel Yes-related kinase, Yrk, is expressed at elevated levels in neural and hematopoietic tissues.</title>
        <authorList>
            <person name="Sudol M."/>
            <person name="Greulich H."/>
            <person name="Newman L."/>
            <person name="Sarkar A."/>
            <person name="Sukegawa J."/>
            <person name="Yamamoto T."/>
        </authorList>
    </citation>
    <scope>NUCLEOTIDE SEQUENCE [MRNA]</scope>
    <scope>TISSUE SPECIFICITY</scope>
    <source>
        <strain>White leghorn</strain>
        <tissue>Muscle</tissue>
    </source>
</reference>
<reference key="2">
    <citation type="journal article" date="1995" name="Mol. Cell. Neurosci.">
        <title>The glypiated neuronal cell adhesion molecule contactin/F11 complexes with src-family protein tyrosine kinase Fyn.</title>
        <authorList>
            <person name="Zisch A.H."/>
            <person name="D'Alessandri L."/>
            <person name="Amrein K."/>
            <person name="Ranscht B."/>
            <person name="Winterhalter K.H."/>
            <person name="Vaughan L."/>
        </authorList>
    </citation>
    <scope>FUNCTION</scope>
</reference>
<comment type="function">
    <text evidence="2 9">Tyrosine-protein kinase implicated in the control of cell growth. Plays a role in the regulation of intracellular calcium levels. Required in brain development and mature brain function with important roles in the regulation of axon growth, axon guidance, and neurite extension. Role in CNTN1-mediated signaling.</text>
</comment>
<comment type="catalytic activity">
    <reaction evidence="7">
        <text>L-tyrosyl-[protein] + ATP = O-phospho-L-tyrosyl-[protein] + ADP + H(+)</text>
        <dbReference type="Rhea" id="RHEA:10596"/>
        <dbReference type="Rhea" id="RHEA-COMP:10136"/>
        <dbReference type="Rhea" id="RHEA-COMP:20101"/>
        <dbReference type="ChEBI" id="CHEBI:15378"/>
        <dbReference type="ChEBI" id="CHEBI:30616"/>
        <dbReference type="ChEBI" id="CHEBI:46858"/>
        <dbReference type="ChEBI" id="CHEBI:61978"/>
        <dbReference type="ChEBI" id="CHEBI:456216"/>
        <dbReference type="EC" id="2.7.10.2"/>
    </reaction>
</comment>
<comment type="cofactor">
    <cofactor>
        <name>Mn(2+)</name>
        <dbReference type="ChEBI" id="CHEBI:29035"/>
    </cofactor>
</comment>
<comment type="activity regulation">
    <text evidence="2">Inhibited by phosphorylation of Tyr-528 by leukocyte common antigen and activated by dephosphorylation of this site.</text>
</comment>
<comment type="subunit">
    <text>Associates through its SH3 domain, to the p85 subunit of phosphatidylinositol 3-kinase.</text>
</comment>
<comment type="subcellular location">
    <subcellularLocation>
        <location evidence="2">Cytoplasm</location>
    </subcellularLocation>
    <subcellularLocation>
        <location evidence="2">Nucleus</location>
    </subcellularLocation>
    <subcellularLocation>
        <location evidence="2">Cell membrane</location>
    </subcellularLocation>
    <subcellularLocation>
        <location evidence="3">Perikaryon</location>
    </subcellularLocation>
    <text evidence="2">Present and active in lipid rafts (By similarity). Palmitoylation is crucial for proper trafficking (By similarity).</text>
</comment>
<comment type="tissue specificity">
    <text evidence="10">Thymus and spleen.</text>
</comment>
<comment type="similarity">
    <text evidence="4">Belongs to the protein kinase superfamily. Tyr protein kinase family. SRC subfamily.</text>
</comment>
<dbReference type="EC" id="2.7.10.2"/>
<dbReference type="EMBL" id="X52841">
    <property type="protein sequence ID" value="CAA37025.1"/>
    <property type="molecule type" value="mRNA"/>
</dbReference>
<dbReference type="PIR" id="S33568">
    <property type="entry name" value="S33568"/>
</dbReference>
<dbReference type="PDB" id="2L2P">
    <property type="method" value="NMR"/>
    <property type="chains" value="A=85-142"/>
</dbReference>
<dbReference type="PDB" id="2LP5">
    <property type="method" value="NMR"/>
    <property type="chains" value="A=85-142"/>
</dbReference>
<dbReference type="PDB" id="3CQT">
    <property type="method" value="X-ray"/>
    <property type="resolution" value="1.60 A"/>
    <property type="chains" value="A=85-142"/>
</dbReference>
<dbReference type="PDBsum" id="2L2P"/>
<dbReference type="PDBsum" id="2LP5"/>
<dbReference type="PDBsum" id="3CQT"/>
<dbReference type="BMRB" id="Q05876"/>
<dbReference type="SMR" id="Q05876"/>
<dbReference type="DIP" id="DIP-738N"/>
<dbReference type="FunCoup" id="Q05876">
    <property type="interactions" value="6"/>
</dbReference>
<dbReference type="MINT" id="Q05876"/>
<dbReference type="STRING" id="9031.ENSGALP00000069903"/>
<dbReference type="PaxDb" id="9031-ENSGALP00000024180"/>
<dbReference type="VEuPathDB" id="HostDB:geneid_396294"/>
<dbReference type="eggNOG" id="KOG0197">
    <property type="taxonomic scope" value="Eukaryota"/>
</dbReference>
<dbReference type="InParanoid" id="Q05876"/>
<dbReference type="OrthoDB" id="4062651at2759"/>
<dbReference type="PhylomeDB" id="Q05876"/>
<dbReference type="BRENDA" id="2.7.10.2">
    <property type="organism ID" value="1306"/>
</dbReference>
<dbReference type="EvolutionaryTrace" id="Q05876"/>
<dbReference type="Proteomes" id="UP000000539">
    <property type="component" value="Unassembled WGS sequence"/>
</dbReference>
<dbReference type="GO" id="GO:0005829">
    <property type="term" value="C:cytosol"/>
    <property type="evidence" value="ECO:0000304"/>
    <property type="project" value="Reactome"/>
</dbReference>
<dbReference type="GO" id="GO:0045121">
    <property type="term" value="C:membrane raft"/>
    <property type="evidence" value="ECO:0000314"/>
    <property type="project" value="AgBase"/>
</dbReference>
<dbReference type="GO" id="GO:0005634">
    <property type="term" value="C:nucleus"/>
    <property type="evidence" value="ECO:0007669"/>
    <property type="project" value="UniProtKB-SubCell"/>
</dbReference>
<dbReference type="GO" id="GO:0043204">
    <property type="term" value="C:perikaryon"/>
    <property type="evidence" value="ECO:0007669"/>
    <property type="project" value="UniProtKB-SubCell"/>
</dbReference>
<dbReference type="GO" id="GO:0005886">
    <property type="term" value="C:plasma membrane"/>
    <property type="evidence" value="ECO:0000318"/>
    <property type="project" value="GO_Central"/>
</dbReference>
<dbReference type="GO" id="GO:0005524">
    <property type="term" value="F:ATP binding"/>
    <property type="evidence" value="ECO:0007669"/>
    <property type="project" value="UniProtKB-KW"/>
</dbReference>
<dbReference type="GO" id="GO:0046872">
    <property type="term" value="F:metal ion binding"/>
    <property type="evidence" value="ECO:0007669"/>
    <property type="project" value="UniProtKB-KW"/>
</dbReference>
<dbReference type="GO" id="GO:0004715">
    <property type="term" value="F:non-membrane spanning protein tyrosine kinase activity"/>
    <property type="evidence" value="ECO:0000318"/>
    <property type="project" value="GO_Central"/>
</dbReference>
<dbReference type="GO" id="GO:0004672">
    <property type="term" value="F:protein kinase activity"/>
    <property type="evidence" value="ECO:0000250"/>
    <property type="project" value="AgBase"/>
</dbReference>
<dbReference type="GO" id="GO:0004713">
    <property type="term" value="F:protein tyrosine kinase activity"/>
    <property type="evidence" value="ECO:0000250"/>
    <property type="project" value="AgBase"/>
</dbReference>
<dbReference type="GO" id="GO:0005102">
    <property type="term" value="F:signaling receptor binding"/>
    <property type="evidence" value="ECO:0000318"/>
    <property type="project" value="GO_Central"/>
</dbReference>
<dbReference type="GO" id="GO:0015631">
    <property type="term" value="F:tubulin binding"/>
    <property type="evidence" value="ECO:0000250"/>
    <property type="project" value="AgBase"/>
</dbReference>
<dbReference type="GO" id="GO:0030154">
    <property type="term" value="P:cell differentiation"/>
    <property type="evidence" value="ECO:0000318"/>
    <property type="project" value="GO_Central"/>
</dbReference>
<dbReference type="GO" id="GO:0007169">
    <property type="term" value="P:cell surface receptor protein tyrosine kinase signaling pathway"/>
    <property type="evidence" value="ECO:0000318"/>
    <property type="project" value="GO_Central"/>
</dbReference>
<dbReference type="GO" id="GO:0030900">
    <property type="term" value="P:forebrain development"/>
    <property type="evidence" value="ECO:0000250"/>
    <property type="project" value="AgBase"/>
</dbReference>
<dbReference type="GO" id="GO:0001764">
    <property type="term" value="P:neuron migration"/>
    <property type="evidence" value="ECO:0000250"/>
    <property type="project" value="AgBase"/>
</dbReference>
<dbReference type="GO" id="GO:0018108">
    <property type="term" value="P:peptidyl-tyrosine phosphorylation"/>
    <property type="evidence" value="ECO:0000250"/>
    <property type="project" value="AgBase"/>
</dbReference>
<dbReference type="GO" id="GO:0038026">
    <property type="term" value="P:reelin-mediated signaling pathway"/>
    <property type="evidence" value="ECO:0000250"/>
    <property type="project" value="UniProtKB"/>
</dbReference>
<dbReference type="GO" id="GO:0008360">
    <property type="term" value="P:regulation of cell shape"/>
    <property type="evidence" value="ECO:0000250"/>
    <property type="project" value="AgBase"/>
</dbReference>
<dbReference type="GO" id="GO:0050852">
    <property type="term" value="P:T cell receptor signaling pathway"/>
    <property type="evidence" value="ECO:0000318"/>
    <property type="project" value="GO_Central"/>
</dbReference>
<dbReference type="CDD" id="cd05070">
    <property type="entry name" value="PTKc_Fyn"/>
    <property type="match status" value="1"/>
</dbReference>
<dbReference type="CDD" id="cd10368">
    <property type="entry name" value="SH2_Src_Fyn"/>
    <property type="match status" value="1"/>
</dbReference>
<dbReference type="CDD" id="cd12006">
    <property type="entry name" value="SH3_Fyn_Yrk"/>
    <property type="match status" value="1"/>
</dbReference>
<dbReference type="FunFam" id="1.10.510.10:FF:000553">
    <property type="entry name" value="Tyrosine-protein kinase"/>
    <property type="match status" value="1"/>
</dbReference>
<dbReference type="FunFam" id="3.30.200.20:FF:000016">
    <property type="entry name" value="Tyrosine-protein kinase"/>
    <property type="match status" value="1"/>
</dbReference>
<dbReference type="FunFam" id="2.30.30.40:FF:000182">
    <property type="entry name" value="Tyrosine-protein kinase Fyn"/>
    <property type="match status" value="1"/>
</dbReference>
<dbReference type="FunFam" id="3.30.505.10:FF:000120">
    <property type="entry name" value="Tyrosine-protein kinase Fyn"/>
    <property type="match status" value="1"/>
</dbReference>
<dbReference type="Gene3D" id="3.30.200.20">
    <property type="entry name" value="Phosphorylase Kinase, domain 1"/>
    <property type="match status" value="1"/>
</dbReference>
<dbReference type="Gene3D" id="3.30.505.10">
    <property type="entry name" value="SH2 domain"/>
    <property type="match status" value="1"/>
</dbReference>
<dbReference type="Gene3D" id="2.30.30.40">
    <property type="entry name" value="SH3 Domains"/>
    <property type="match status" value="1"/>
</dbReference>
<dbReference type="Gene3D" id="1.10.510.10">
    <property type="entry name" value="Transferase(Phosphotransferase) domain 1"/>
    <property type="match status" value="1"/>
</dbReference>
<dbReference type="InterPro" id="IPR035750">
    <property type="entry name" value="Fyn/Yrk_SH3"/>
</dbReference>
<dbReference type="InterPro" id="IPR011009">
    <property type="entry name" value="Kinase-like_dom_sf"/>
</dbReference>
<dbReference type="InterPro" id="IPR050198">
    <property type="entry name" value="Non-receptor_tyrosine_kinases"/>
</dbReference>
<dbReference type="InterPro" id="IPR000719">
    <property type="entry name" value="Prot_kinase_dom"/>
</dbReference>
<dbReference type="InterPro" id="IPR017441">
    <property type="entry name" value="Protein_kinase_ATP_BS"/>
</dbReference>
<dbReference type="InterPro" id="IPR001245">
    <property type="entry name" value="Ser-Thr/Tyr_kinase_cat_dom"/>
</dbReference>
<dbReference type="InterPro" id="IPR000980">
    <property type="entry name" value="SH2"/>
</dbReference>
<dbReference type="InterPro" id="IPR036860">
    <property type="entry name" value="SH2_dom_sf"/>
</dbReference>
<dbReference type="InterPro" id="IPR036028">
    <property type="entry name" value="SH3-like_dom_sf"/>
</dbReference>
<dbReference type="InterPro" id="IPR001452">
    <property type="entry name" value="SH3_domain"/>
</dbReference>
<dbReference type="InterPro" id="IPR008266">
    <property type="entry name" value="Tyr_kinase_AS"/>
</dbReference>
<dbReference type="InterPro" id="IPR020635">
    <property type="entry name" value="Tyr_kinase_cat_dom"/>
</dbReference>
<dbReference type="PANTHER" id="PTHR24418">
    <property type="entry name" value="TYROSINE-PROTEIN KINASE"/>
    <property type="match status" value="1"/>
</dbReference>
<dbReference type="Pfam" id="PF07714">
    <property type="entry name" value="PK_Tyr_Ser-Thr"/>
    <property type="match status" value="1"/>
</dbReference>
<dbReference type="Pfam" id="PF00017">
    <property type="entry name" value="SH2"/>
    <property type="match status" value="1"/>
</dbReference>
<dbReference type="Pfam" id="PF00018">
    <property type="entry name" value="SH3_1"/>
    <property type="match status" value="1"/>
</dbReference>
<dbReference type="PRINTS" id="PR00401">
    <property type="entry name" value="SH2DOMAIN"/>
</dbReference>
<dbReference type="PRINTS" id="PR00452">
    <property type="entry name" value="SH3DOMAIN"/>
</dbReference>
<dbReference type="PRINTS" id="PR00109">
    <property type="entry name" value="TYRKINASE"/>
</dbReference>
<dbReference type="SMART" id="SM00252">
    <property type="entry name" value="SH2"/>
    <property type="match status" value="1"/>
</dbReference>
<dbReference type="SMART" id="SM00326">
    <property type="entry name" value="SH3"/>
    <property type="match status" value="1"/>
</dbReference>
<dbReference type="SMART" id="SM00219">
    <property type="entry name" value="TyrKc"/>
    <property type="match status" value="1"/>
</dbReference>
<dbReference type="SUPFAM" id="SSF56112">
    <property type="entry name" value="Protein kinase-like (PK-like)"/>
    <property type="match status" value="1"/>
</dbReference>
<dbReference type="SUPFAM" id="SSF55550">
    <property type="entry name" value="SH2 domain"/>
    <property type="match status" value="1"/>
</dbReference>
<dbReference type="SUPFAM" id="SSF50044">
    <property type="entry name" value="SH3-domain"/>
    <property type="match status" value="1"/>
</dbReference>
<dbReference type="PROSITE" id="PS00107">
    <property type="entry name" value="PROTEIN_KINASE_ATP"/>
    <property type="match status" value="1"/>
</dbReference>
<dbReference type="PROSITE" id="PS50011">
    <property type="entry name" value="PROTEIN_KINASE_DOM"/>
    <property type="match status" value="1"/>
</dbReference>
<dbReference type="PROSITE" id="PS00109">
    <property type="entry name" value="PROTEIN_KINASE_TYR"/>
    <property type="match status" value="1"/>
</dbReference>
<dbReference type="PROSITE" id="PS50001">
    <property type="entry name" value="SH2"/>
    <property type="match status" value="1"/>
</dbReference>
<dbReference type="PROSITE" id="PS50002">
    <property type="entry name" value="SH3"/>
    <property type="match status" value="1"/>
</dbReference>
<protein>
    <recommendedName>
        <fullName>Tyrosine-protein kinase Fyn</fullName>
        <ecNumber>2.7.10.2</ecNumber>
    </recommendedName>
    <alternativeName>
        <fullName>Proto-oncogene c-Fyn</fullName>
    </alternativeName>
    <alternativeName>
        <fullName>p59-Fyn</fullName>
    </alternativeName>
</protein>
<organism>
    <name type="scientific">Gallus gallus</name>
    <name type="common">Chicken</name>
    <dbReference type="NCBI Taxonomy" id="9031"/>
    <lineage>
        <taxon>Eukaryota</taxon>
        <taxon>Metazoa</taxon>
        <taxon>Chordata</taxon>
        <taxon>Craniata</taxon>
        <taxon>Vertebrata</taxon>
        <taxon>Euteleostomi</taxon>
        <taxon>Archelosauria</taxon>
        <taxon>Archosauria</taxon>
        <taxon>Dinosauria</taxon>
        <taxon>Saurischia</taxon>
        <taxon>Theropoda</taxon>
        <taxon>Coelurosauria</taxon>
        <taxon>Aves</taxon>
        <taxon>Neognathae</taxon>
        <taxon>Galloanserae</taxon>
        <taxon>Galliformes</taxon>
        <taxon>Phasianidae</taxon>
        <taxon>Phasianinae</taxon>
        <taxon>Gallus</taxon>
    </lineage>
</organism>
<proteinExistence type="evidence at protein level"/>
<gene>
    <name type="primary">FYN</name>
</gene>
<feature type="initiator methionine" description="Removed" evidence="1">
    <location>
        <position position="1"/>
    </location>
</feature>
<feature type="chain" id="PRO_0000088098" description="Tyrosine-protein kinase Fyn">
    <location>
        <begin position="2"/>
        <end position="534"/>
    </location>
</feature>
<feature type="domain" description="SH3" evidence="6">
    <location>
        <begin position="82"/>
        <end position="143"/>
    </location>
</feature>
<feature type="domain" description="SH2" evidence="5">
    <location>
        <begin position="149"/>
        <end position="246"/>
    </location>
</feature>
<feature type="domain" description="Protein kinase" evidence="4">
    <location>
        <begin position="268"/>
        <end position="521"/>
    </location>
</feature>
<feature type="region of interest" description="Disordered" evidence="8">
    <location>
        <begin position="15"/>
        <end position="39"/>
    </location>
</feature>
<feature type="active site" description="Proton acceptor" evidence="4 7">
    <location>
        <position position="387"/>
    </location>
</feature>
<feature type="binding site" evidence="4">
    <location>
        <begin position="274"/>
        <end position="282"/>
    </location>
    <ligand>
        <name>ATP</name>
        <dbReference type="ChEBI" id="CHEBI:30616"/>
    </ligand>
</feature>
<feature type="binding site" evidence="4">
    <location>
        <position position="296"/>
    </location>
    <ligand>
        <name>ATP</name>
        <dbReference type="ChEBI" id="CHEBI:30616"/>
    </ligand>
</feature>
<feature type="modified residue" description="Phosphothreonine; by PKC" evidence="1">
    <location>
        <position position="12"/>
    </location>
</feature>
<feature type="modified residue" description="Phosphotyrosine; by autocatalysis" evidence="1">
    <location>
        <position position="417"/>
    </location>
</feature>
<feature type="modified residue" description="Phosphotyrosine" evidence="1">
    <location>
        <position position="528"/>
    </location>
</feature>
<feature type="lipid moiety-binding region" description="N-myristoyl glycine" evidence="1">
    <location>
        <position position="2"/>
    </location>
</feature>
<feature type="lipid moiety-binding region" description="S-palmitoyl cysteine" evidence="1">
    <location>
        <position position="3"/>
    </location>
</feature>
<feature type="lipid moiety-binding region" description="S-palmitoyl cysteine" evidence="1">
    <location>
        <position position="6"/>
    </location>
</feature>
<feature type="strand" evidence="12">
    <location>
        <begin position="87"/>
        <end position="91"/>
    </location>
</feature>
<feature type="strand" evidence="11">
    <location>
        <begin position="96"/>
        <end position="100"/>
    </location>
</feature>
<feature type="strand" evidence="12">
    <location>
        <begin position="108"/>
        <end position="113"/>
    </location>
</feature>
<feature type="strand" evidence="12">
    <location>
        <begin position="117"/>
        <end position="124"/>
    </location>
</feature>
<feature type="turn" evidence="12">
    <location>
        <begin position="125"/>
        <end position="127"/>
    </location>
</feature>
<feature type="strand" evidence="12">
    <location>
        <begin position="130"/>
        <end position="134"/>
    </location>
</feature>
<feature type="helix" evidence="12">
    <location>
        <begin position="135"/>
        <end position="137"/>
    </location>
</feature>
<feature type="strand" evidence="12">
    <location>
        <begin position="138"/>
        <end position="140"/>
    </location>
</feature>
<accession>Q05876</accession>